<accession>B4U6H0</accession>
<dbReference type="EC" id="2.1.1.198" evidence="1"/>
<dbReference type="EMBL" id="CP001130">
    <property type="protein sequence ID" value="ACG58306.1"/>
    <property type="molecule type" value="Genomic_DNA"/>
</dbReference>
<dbReference type="RefSeq" id="WP_012514660.1">
    <property type="nucleotide sequence ID" value="NC_011126.1"/>
</dbReference>
<dbReference type="SMR" id="B4U6H0"/>
<dbReference type="STRING" id="380749.HY04AAS1_1625"/>
<dbReference type="KEGG" id="hya:HY04AAS1_1625"/>
<dbReference type="eggNOG" id="COG0313">
    <property type="taxonomic scope" value="Bacteria"/>
</dbReference>
<dbReference type="HOGENOM" id="CLU_044779_4_0_0"/>
<dbReference type="OrthoDB" id="9809084at2"/>
<dbReference type="GO" id="GO:0005737">
    <property type="term" value="C:cytoplasm"/>
    <property type="evidence" value="ECO:0007669"/>
    <property type="project" value="UniProtKB-SubCell"/>
</dbReference>
<dbReference type="GO" id="GO:0070677">
    <property type="term" value="F:rRNA (cytosine-2'-O-)-methyltransferase activity"/>
    <property type="evidence" value="ECO:0007669"/>
    <property type="project" value="UniProtKB-UniRule"/>
</dbReference>
<dbReference type="CDD" id="cd11648">
    <property type="entry name" value="RsmI"/>
    <property type="match status" value="1"/>
</dbReference>
<dbReference type="FunFam" id="3.30.950.10:FF:000002">
    <property type="entry name" value="Ribosomal RNA small subunit methyltransferase I"/>
    <property type="match status" value="1"/>
</dbReference>
<dbReference type="FunFam" id="3.40.1010.10:FF:000007">
    <property type="entry name" value="Ribosomal RNA small subunit methyltransferase I"/>
    <property type="match status" value="1"/>
</dbReference>
<dbReference type="Gene3D" id="3.40.1010.10">
    <property type="entry name" value="Cobalt-precorrin-4 Transmethylase, Domain 1"/>
    <property type="match status" value="1"/>
</dbReference>
<dbReference type="Gene3D" id="3.30.950.10">
    <property type="entry name" value="Methyltransferase, Cobalt-precorrin-4 Transmethylase, Domain 2"/>
    <property type="match status" value="1"/>
</dbReference>
<dbReference type="HAMAP" id="MF_01877">
    <property type="entry name" value="16SrRNA_methyltr_I"/>
    <property type="match status" value="1"/>
</dbReference>
<dbReference type="InterPro" id="IPR000878">
    <property type="entry name" value="4pyrrol_Mease"/>
</dbReference>
<dbReference type="InterPro" id="IPR035996">
    <property type="entry name" value="4pyrrol_Methylase_sf"/>
</dbReference>
<dbReference type="InterPro" id="IPR014777">
    <property type="entry name" value="4pyrrole_Mease_sub1"/>
</dbReference>
<dbReference type="InterPro" id="IPR014776">
    <property type="entry name" value="4pyrrole_Mease_sub2"/>
</dbReference>
<dbReference type="InterPro" id="IPR008189">
    <property type="entry name" value="rRNA_ssu_MeTfrase_I"/>
</dbReference>
<dbReference type="InterPro" id="IPR018063">
    <property type="entry name" value="SAM_MeTrfase_RsmI_CS"/>
</dbReference>
<dbReference type="NCBIfam" id="TIGR00096">
    <property type="entry name" value="16S rRNA (cytidine(1402)-2'-O)-methyltransferase"/>
    <property type="match status" value="1"/>
</dbReference>
<dbReference type="PANTHER" id="PTHR46111">
    <property type="entry name" value="RIBOSOMAL RNA SMALL SUBUNIT METHYLTRANSFERASE I"/>
    <property type="match status" value="1"/>
</dbReference>
<dbReference type="PANTHER" id="PTHR46111:SF1">
    <property type="entry name" value="RIBOSOMAL RNA SMALL SUBUNIT METHYLTRANSFERASE I"/>
    <property type="match status" value="1"/>
</dbReference>
<dbReference type="Pfam" id="PF00590">
    <property type="entry name" value="TP_methylase"/>
    <property type="match status" value="1"/>
</dbReference>
<dbReference type="PIRSF" id="PIRSF005917">
    <property type="entry name" value="MTase_YraL"/>
    <property type="match status" value="1"/>
</dbReference>
<dbReference type="SUPFAM" id="SSF53790">
    <property type="entry name" value="Tetrapyrrole methylase"/>
    <property type="match status" value="1"/>
</dbReference>
<dbReference type="PROSITE" id="PS01296">
    <property type="entry name" value="RSMI"/>
    <property type="match status" value="1"/>
</dbReference>
<comment type="function">
    <text evidence="1">Catalyzes the 2'-O-methylation of the ribose of cytidine 1402 (C1402) in 16S rRNA.</text>
</comment>
<comment type="catalytic activity">
    <reaction evidence="1">
        <text>cytidine(1402) in 16S rRNA + S-adenosyl-L-methionine = 2'-O-methylcytidine(1402) in 16S rRNA + S-adenosyl-L-homocysteine + H(+)</text>
        <dbReference type="Rhea" id="RHEA:42924"/>
        <dbReference type="Rhea" id="RHEA-COMP:10285"/>
        <dbReference type="Rhea" id="RHEA-COMP:10286"/>
        <dbReference type="ChEBI" id="CHEBI:15378"/>
        <dbReference type="ChEBI" id="CHEBI:57856"/>
        <dbReference type="ChEBI" id="CHEBI:59789"/>
        <dbReference type="ChEBI" id="CHEBI:74495"/>
        <dbReference type="ChEBI" id="CHEBI:82748"/>
        <dbReference type="EC" id="2.1.1.198"/>
    </reaction>
</comment>
<comment type="subcellular location">
    <subcellularLocation>
        <location evidence="1">Cytoplasm</location>
    </subcellularLocation>
</comment>
<comment type="similarity">
    <text evidence="1">Belongs to the methyltransferase superfamily. RsmI family.</text>
</comment>
<organism>
    <name type="scientific">Hydrogenobaculum sp. (strain Y04AAS1)</name>
    <dbReference type="NCBI Taxonomy" id="380749"/>
    <lineage>
        <taxon>Bacteria</taxon>
        <taxon>Pseudomonadati</taxon>
        <taxon>Aquificota</taxon>
        <taxon>Aquificia</taxon>
        <taxon>Aquificales</taxon>
        <taxon>Aquificaceae</taxon>
        <taxon>Hydrogenobaculum</taxon>
    </lineage>
</organism>
<gene>
    <name evidence="1" type="primary">rsmI</name>
    <name type="ordered locus">HY04AAS1_1625</name>
</gene>
<protein>
    <recommendedName>
        <fullName evidence="1">Ribosomal RNA small subunit methyltransferase I</fullName>
        <ecNumber evidence="1">2.1.1.198</ecNumber>
    </recommendedName>
    <alternativeName>
        <fullName evidence="1">16S rRNA 2'-O-ribose C1402 methyltransferase</fullName>
    </alternativeName>
    <alternativeName>
        <fullName evidence="1">rRNA (cytidine-2'-O-)-methyltransferase RsmI</fullName>
    </alternativeName>
</protein>
<feature type="chain" id="PRO_0000394487" description="Ribosomal RNA small subunit methyltransferase I">
    <location>
        <begin position="1"/>
        <end position="230"/>
    </location>
</feature>
<name>RSMI_HYDS0</name>
<proteinExistence type="inferred from homology"/>
<reference key="1">
    <citation type="journal article" date="2009" name="J. Bacteriol.">
        <title>Complete and draft genome sequences of six members of the Aquificales.</title>
        <authorList>
            <person name="Reysenbach A.-L."/>
            <person name="Hamamura N."/>
            <person name="Podar M."/>
            <person name="Griffiths E."/>
            <person name="Ferreira S."/>
            <person name="Hochstein R."/>
            <person name="Heidelberg J."/>
            <person name="Johnson J."/>
            <person name="Mead D."/>
            <person name="Pohorille A."/>
            <person name="Sarmiento M."/>
            <person name="Schweighofer K."/>
            <person name="Seshadri R."/>
            <person name="Voytek M.A."/>
        </authorList>
    </citation>
    <scope>NUCLEOTIDE SEQUENCE [LARGE SCALE GENOMIC DNA]</scope>
    <source>
        <strain>Y04AAS1</strain>
    </source>
</reference>
<keyword id="KW-0963">Cytoplasm</keyword>
<keyword id="KW-0489">Methyltransferase</keyword>
<keyword id="KW-0698">rRNA processing</keyword>
<keyword id="KW-0949">S-adenosyl-L-methionine</keyword>
<keyword id="KW-0808">Transferase</keyword>
<sequence length="230" mass="25956">MKLYVVPTPIGNLEDITIRAINILKSVKFIACEDTRRIQILLKHYNIEGKTLLSYYHPKEAIQIRKIISLIRKDEDVALVSDAGTPSISDPGFKLINACIKEDIPVEVLPGPCALITALVGSGLPTHSFMFLGFAPRKSQESFYKEVFSSDTGSYILYESPQRILDTLELISHIEPNITVAIARELTKMHEEYIRGNIKDVIEELKKRNNIKGEIVLVLSKENTLYQESL</sequence>
<evidence type="ECO:0000255" key="1">
    <source>
        <dbReference type="HAMAP-Rule" id="MF_01877"/>
    </source>
</evidence>